<reference key="1">
    <citation type="journal article" date="1995" name="J. Biol. Chem.">
        <title>Mosaicism in vacuolating cytotoxin alleles of Helicobacter pylori. Association of specific vacA types with cytotoxin production and peptic ulceration.</title>
        <authorList>
            <person name="Atherton J.C."/>
            <person name="Cao P."/>
            <person name="Peek R.M. Jr."/>
            <person name="Tummuru M.K."/>
            <person name="Blaser M.J."/>
            <person name="Cover T.L."/>
        </authorList>
    </citation>
    <scope>NUCLEOTIDE SEQUENCE [GENOMIC DNA]</scope>
    <source>
        <strain>TX30A</strain>
    </source>
</reference>
<accession>Q48253</accession>
<organism>
    <name type="scientific">Helicobacter pylori</name>
    <name type="common">Campylobacter pylori</name>
    <dbReference type="NCBI Taxonomy" id="210"/>
    <lineage>
        <taxon>Bacteria</taxon>
        <taxon>Pseudomonadati</taxon>
        <taxon>Campylobacterota</taxon>
        <taxon>Epsilonproteobacteria</taxon>
        <taxon>Campylobacterales</taxon>
        <taxon>Helicobacteraceae</taxon>
        <taxon>Helicobacter</taxon>
    </lineage>
</organism>
<name>VACA3_HELPX</name>
<dbReference type="EMBL" id="U29401">
    <property type="protein sequence ID" value="AAA86834.1"/>
    <property type="molecule type" value="Genomic_DNA"/>
</dbReference>
<dbReference type="SMR" id="Q48253"/>
<dbReference type="GO" id="GO:0009279">
    <property type="term" value="C:cell outer membrane"/>
    <property type="evidence" value="ECO:0007669"/>
    <property type="project" value="UniProtKB-SubCell"/>
</dbReference>
<dbReference type="GO" id="GO:0009986">
    <property type="term" value="C:cell surface"/>
    <property type="evidence" value="ECO:0007669"/>
    <property type="project" value="UniProtKB-SubCell"/>
</dbReference>
<dbReference type="GO" id="GO:0005576">
    <property type="term" value="C:extracellular region"/>
    <property type="evidence" value="ECO:0007669"/>
    <property type="project" value="UniProtKB-SubCell"/>
</dbReference>
<dbReference type="GO" id="GO:0042597">
    <property type="term" value="C:periplasmic space"/>
    <property type="evidence" value="ECO:0007669"/>
    <property type="project" value="UniProtKB-SubCell"/>
</dbReference>
<dbReference type="GO" id="GO:0090729">
    <property type="term" value="F:toxin activity"/>
    <property type="evidence" value="ECO:0007669"/>
    <property type="project" value="UniProtKB-KW"/>
</dbReference>
<dbReference type="Gene3D" id="2.40.128.130">
    <property type="entry name" value="Autotransporter beta-domain"/>
    <property type="match status" value="1"/>
</dbReference>
<dbReference type="InterPro" id="IPR005546">
    <property type="entry name" value="Autotransporte_beta"/>
</dbReference>
<dbReference type="InterPro" id="IPR036709">
    <property type="entry name" value="Autotransporte_beta_dom_sf"/>
</dbReference>
<dbReference type="InterPro" id="IPR003842">
    <property type="entry name" value="Vacuolating_cytotoxin"/>
</dbReference>
<dbReference type="Pfam" id="PF03797">
    <property type="entry name" value="Autotransporter"/>
    <property type="match status" value="1"/>
</dbReference>
<dbReference type="Pfam" id="PF02691">
    <property type="entry name" value="VacA"/>
    <property type="match status" value="1"/>
</dbReference>
<dbReference type="PRINTS" id="PR01656">
    <property type="entry name" value="VACCYTOTOXIN"/>
</dbReference>
<dbReference type="SMART" id="SM00869">
    <property type="entry name" value="Autotransporter"/>
    <property type="match status" value="1"/>
</dbReference>
<dbReference type="SUPFAM" id="SSF103515">
    <property type="entry name" value="Autotransporter"/>
    <property type="match status" value="1"/>
</dbReference>
<dbReference type="PROSITE" id="PS51208">
    <property type="entry name" value="AUTOTRANSPORTER"/>
    <property type="match status" value="1"/>
</dbReference>
<keyword id="KW-0998">Cell outer membrane</keyword>
<keyword id="KW-0472">Membrane</keyword>
<keyword id="KW-0574">Periplasm</keyword>
<keyword id="KW-0964">Secreted</keyword>
<keyword id="KW-0732">Signal</keyword>
<keyword id="KW-0800">Toxin</keyword>
<keyword id="KW-0812">Transmembrane</keyword>
<keyword id="KW-1134">Transmembrane beta strand</keyword>
<keyword id="KW-0843">Virulence</keyword>
<feature type="signal peptide" evidence="2">
    <location>
        <begin position="1"/>
        <end position="30"/>
    </location>
</feature>
<feature type="chain" id="PRO_0000387589" description="Vacuolating cytotoxin autotransporter">
    <location>
        <begin position="31"/>
        <end position="1310"/>
    </location>
</feature>
<feature type="chain" id="PRO_0000002718" description="Vacuolating cytotoxin">
    <location>
        <begin position="31"/>
        <end status="unknown"/>
    </location>
</feature>
<feature type="chain" id="PRO_0000002719" description="Vacuolating cytotoxin translocator" evidence="2">
    <location>
        <begin status="unknown"/>
        <end position="1310"/>
    </location>
</feature>
<feature type="domain" description="Autotransporter" evidence="3">
    <location>
        <begin position="1038"/>
        <end position="1310"/>
    </location>
</feature>
<feature type="region of interest" description="Disordered" evidence="4">
    <location>
        <begin position="339"/>
        <end position="364"/>
    </location>
</feature>
<feature type="compositionally biased region" description="Polar residues" evidence="4">
    <location>
        <begin position="350"/>
        <end position="364"/>
    </location>
</feature>
<protein>
    <recommendedName>
        <fullName>Vacuolating cytotoxin autotransporter</fullName>
    </recommendedName>
    <component>
        <recommendedName>
            <fullName>Vacuolating cytotoxin</fullName>
        </recommendedName>
    </component>
    <component>
        <recommendedName>
            <fullName>Vacuolating cytotoxin translocator</fullName>
        </recommendedName>
    </component>
</protein>
<gene>
    <name type="primary">vacA</name>
</gene>
<evidence type="ECO:0000250" key="1"/>
<evidence type="ECO:0000255" key="2"/>
<evidence type="ECO:0000255" key="3">
    <source>
        <dbReference type="PROSITE-ProRule" id="PRU00556"/>
    </source>
</evidence>
<evidence type="ECO:0000256" key="4">
    <source>
        <dbReference type="SAM" id="MobiDB-lite"/>
    </source>
</evidence>
<comment type="function">
    <text>Induces vacuolation of eukaryotic cells. Causes ulceration and gastric lesions.</text>
</comment>
<comment type="subcellular location">
    <molecule>Vacuolating cytotoxin autotransporter</molecule>
    <subcellularLocation>
        <location evidence="1">Periplasm</location>
    </subcellularLocation>
</comment>
<comment type="subcellular location">
    <molecule>Vacuolating cytotoxin</molecule>
    <subcellularLocation>
        <location>Secreted</location>
    </subcellularLocation>
    <subcellularLocation>
        <location>Cell surface</location>
    </subcellularLocation>
</comment>
<comment type="subcellular location">
    <molecule>Vacuolating cytotoxin translocator</molecule>
    <subcellularLocation>
        <location evidence="1">Cell outer membrane</location>
        <topology evidence="1">Multi-pass membrane protein</topology>
    </subcellularLocation>
    <text evidence="1">The cleaved C-terminal fragment (autotransporter domain) is localized in the outer membrane.</text>
</comment>
<comment type="domain">
    <text evidence="1">The signal peptide, cleaved at the inner membrane, guides the autotransporter protein to the periplasmic space. Then, insertion of the C-terminal translocator domain in the outer membrane forms a hydrophilic pore for the translocation of the passenger domain to the bacterial cell surface, with subsequent cleavage (By similarity).</text>
</comment>
<proteinExistence type="inferred from homology"/>
<sequence>MEIQQTHRKINRPIISLALVGVLMGTELGANTPNDPIHSESRAFFTTVIIPAIVGGIATGAAVGTVSGLLSWGLKQAEQANKAPDKPDKVWRIQAGRGFDNFPHKQYDLYKSLLSSKIDGGWDWGNAARHYWVKDGQWNKLEVDMQNAVGTYNLSGLINFTGGDLDVNMQKATLRLGQFNGNSFTSFKDGANRTTRVNFDAKNILIDNFVEINNRVGSGAGRKASSTVLTLKSSEKITSRENAEISLYDGATLNLVSSSNQSVDLYGKVWMGRLQYVGAYLAPSYSTIDTSKVQGEMNFRHLAVGDQNAAQAGIIANKKTNIGTLDLWQSAGLSIITPPEGGYESKTKDNPQNNPKNDAQKTEIQPTQVIDGPFAGGKDTVVNIFHLNTKADGTLRAGGFKASLSTNAAHLHIGEGGVNLSNQASGRTLLVENLTGNITVEGTLRVNNQVGGAAIAGSSANFEFKAGEDTNNATATFNNDIHLGKAVNLRVDAHTANFNGNIYLGKSTNLRVNGHTAHFKNIDATKSDNGLNTSTLDFSGVTDKVNINKLTTAATNVNIKNFDIKELVVTTRVQSFGQYTIFGENIGDKSRIGVVSLQTGYSPAYSGGVTFKGGKKLVIDEIYHAPWNYFDARNVTDVEINKRILFGAPGNIAGKTGLMFNNLTLNSNASMDYGKDLDLTIQGHFTNNQGTMNLFVQDGRVATLNAGHQASMIFNNLVDSTTGFYKPLIKINNAQNLTKNKEHVLVKARNIDYNLVGVQGASYDNISASNTNLQEQFKERLALYNNNNRMDTCVVRKDNLNDIKACGMAIGNQSMVNNPENYKYLEGKAWKNTGINKTANNTTIAVNLGNNSTPTNSTTDTTNLPTNTTNNARFASYALIKNAPFAHSATPNLVAINQHDFGTIESVFELANRSSDIDTLYANSGAQGRDLLQTLLIDSHDAGYARTMIDATSANEITQQLNAATTTLNNIASLEHKTSGLQTLSLSNAMILNSRLVNLSRKHTNHIDSFAKRLQALKDQRFASLESAAEVLYQFAPKYEKPTNVWANAIGGTSLNNGSNASLYGTSAGVDAYLNGEVEAIVGGFGSYGYSSFSNQANSLNSGANNTNFGVYSRIFANQHEFDFEAQGALGSDQSSLNFKSALLQDLNQSYHYLAYSATTRASYGYDFAFFRNALVLKPSVGVSYNHLGSTNFKSNSNQVALSNGSSSQHLFNANANVEARYYYGDTSYFYMNAGVLQEFARFGSNNAVSLNTFKVNATRNPLNTHARVMMGGELQLAKEVFLNLGVVYLHNLISNASHFASNLGMRYSF</sequence>